<accession>Q9ZV43</accession>
<organism>
    <name type="scientific">Arabidopsis thaliana</name>
    <name type="common">Mouse-ear cress</name>
    <dbReference type="NCBI Taxonomy" id="3702"/>
    <lineage>
        <taxon>Eukaryota</taxon>
        <taxon>Viridiplantae</taxon>
        <taxon>Streptophyta</taxon>
        <taxon>Embryophyta</taxon>
        <taxon>Tracheophyta</taxon>
        <taxon>Spermatophyta</taxon>
        <taxon>Magnoliopsida</taxon>
        <taxon>eudicotyledons</taxon>
        <taxon>Gunneridae</taxon>
        <taxon>Pentapetalae</taxon>
        <taxon>rosids</taxon>
        <taxon>malvids</taxon>
        <taxon>Brassicales</taxon>
        <taxon>Brassicaceae</taxon>
        <taxon>Camelineae</taxon>
        <taxon>Arabidopsis</taxon>
    </lineage>
</organism>
<evidence type="ECO:0000250" key="1">
    <source>
        <dbReference type="UniProtKB" id="Q03468"/>
    </source>
</evidence>
<evidence type="ECO:0000255" key="2"/>
<evidence type="ECO:0000255" key="3">
    <source>
        <dbReference type="PROSITE-ProRule" id="PRU00541"/>
    </source>
</evidence>
<evidence type="ECO:0000255" key="4">
    <source>
        <dbReference type="PROSITE-ProRule" id="PRU00542"/>
    </source>
</evidence>
<evidence type="ECO:0000255" key="5">
    <source>
        <dbReference type="PROSITE-ProRule" id="PRU00768"/>
    </source>
</evidence>
<evidence type="ECO:0000256" key="6">
    <source>
        <dbReference type="SAM" id="MobiDB-lite"/>
    </source>
</evidence>
<evidence type="ECO:0000269" key="7">
    <source>
    </source>
</evidence>
<evidence type="ECO:0000303" key="8">
    <source>
    </source>
</evidence>
<evidence type="ECO:0000303" key="9">
    <source>
    </source>
</evidence>
<evidence type="ECO:0000303" key="10">
    <source>
    </source>
</evidence>
<evidence type="ECO:0000305" key="11"/>
<evidence type="ECO:0000312" key="12">
    <source>
        <dbReference type="Araport" id="AT2G18760"/>
    </source>
</evidence>
<evidence type="ECO:0000312" key="13">
    <source>
        <dbReference type="EMBL" id="AAD08945.1"/>
    </source>
</evidence>
<protein>
    <recommendedName>
        <fullName evidence="10">Protein CHROMATIN REMODELING 8</fullName>
        <shortName>AtCHR8</shortName>
        <shortName evidence="8">AtCSB</shortName>
        <ecNumber>3.6.4.-</ecNumber>
    </recommendedName>
</protein>
<gene>
    <name evidence="10" type="primary">CHR8</name>
    <name evidence="8" type="synonym">CSB</name>
    <name type="synonym">ERCC6</name>
    <name type="synonym">RAD26</name>
    <name evidence="9" type="synonym">RAD54</name>
    <name evidence="12" type="ordered locus">At2g18760</name>
    <name evidence="13" type="ORF">MSF3.14</name>
</gene>
<feature type="chain" id="PRO_0000430854" description="Protein CHROMATIN REMODELING 8">
    <location>
        <begin position="1"/>
        <end position="1187"/>
    </location>
</feature>
<feature type="domain" description="Helicase ATP-binding" evidence="3">
    <location>
        <begin position="397"/>
        <end position="594"/>
    </location>
</feature>
<feature type="domain" description="Helicase C-terminal" evidence="4">
    <location>
        <begin position="730"/>
        <end position="890"/>
    </location>
</feature>
<feature type="region of interest" description="Disordered" evidence="6">
    <location>
        <begin position="1"/>
        <end position="55"/>
    </location>
</feature>
<feature type="region of interest" description="Disordered" evidence="6">
    <location>
        <begin position="223"/>
        <end position="247"/>
    </location>
</feature>
<feature type="region of interest" description="Disordered" evidence="6">
    <location>
        <begin position="273"/>
        <end position="343"/>
    </location>
</feature>
<feature type="region of interest" description="Disordered" evidence="6">
    <location>
        <begin position="467"/>
        <end position="501"/>
    </location>
</feature>
<feature type="region of interest" description="Disordered" evidence="6">
    <location>
        <begin position="1050"/>
        <end position="1075"/>
    </location>
</feature>
<feature type="coiled-coil region" evidence="2">
    <location>
        <begin position="110"/>
        <end position="170"/>
    </location>
</feature>
<feature type="coiled-coil region" evidence="2">
    <location>
        <begin position="987"/>
        <end position="1016"/>
    </location>
</feature>
<feature type="short sequence motif" description="Nuclear localization signal 1" evidence="5">
    <location>
        <begin position="162"/>
        <end position="169"/>
    </location>
</feature>
<feature type="short sequence motif" description="Nuclear localization signal 2" evidence="5">
    <location>
        <begin position="290"/>
        <end position="297"/>
    </location>
</feature>
<feature type="short sequence motif" description="Nuclear localization signal 3" evidence="5">
    <location>
        <begin position="310"/>
        <end position="317"/>
    </location>
</feature>
<feature type="short sequence motif" description="DEGH box" evidence="1 3">
    <location>
        <begin position="545"/>
        <end position="548"/>
    </location>
</feature>
<feature type="compositionally biased region" description="Polar residues" evidence="6">
    <location>
        <begin position="9"/>
        <end position="19"/>
    </location>
</feature>
<feature type="compositionally biased region" description="Basic and acidic residues" evidence="6">
    <location>
        <begin position="23"/>
        <end position="48"/>
    </location>
</feature>
<feature type="compositionally biased region" description="Basic residues" evidence="6">
    <location>
        <begin position="305"/>
        <end position="328"/>
    </location>
</feature>
<feature type="compositionally biased region" description="Basic and acidic residues" evidence="6">
    <location>
        <begin position="492"/>
        <end position="501"/>
    </location>
</feature>
<feature type="compositionally biased region" description="Polar residues" evidence="6">
    <location>
        <begin position="1050"/>
        <end position="1059"/>
    </location>
</feature>
<feature type="binding site" evidence="3">
    <location>
        <begin position="410"/>
        <end position="417"/>
    </location>
    <ligand>
        <name>ATP</name>
        <dbReference type="ChEBI" id="CHEBI:30616"/>
    </ligand>
</feature>
<sequence>MEEDEDQFLLSSLGVTSANPEDLEQKILDEATKKPDNDEGGSVEEKSTQLEGTNLLSSSQNELLNKLRAVKFEIDAVASTVENVDEIAAEKGLKKDDESDLQGLHSGSALQHALATDRLRSLKKRKIQLEKELTGLHGQSASSSADHGNLLRDLVKEKPSLKRKLKEIRKPSRRDGKKVKVVSFREDTDFDAVFDGASAGFVETERDELVRKGILTPFHKLDGFERRLQQPGPSNSRNLPEGDDENEDSSIIDRAVQSMSLAAKARPTTKLLDAEDLPKLEPPTAPFRRLRKLYKTPNSPDNEAKKRKAGKKSKKTRPLPEKKWRKRISREDSSLQGSGDGRRILTTSSCEEEELDDFDDADDNERSSVQLEGGLNIPECIFRKLFDYQRVGVQWLWELHCQRAGGIIGDEMGLGKTIQVLSFLGSLHFSKMYKPSIIICPVTLLRQWRREAQKWYPDFHVEILHDSAQDSGHGKGQGKASESDYDSESSVDSDHEPKSKNTKKWDSLLNRVLNSESGLLITTYEQLRLQGEKLLNIEWGYAVLDEGHRIRNPNSDITLVCKQLQTVHRIIMTGAPIQNKLTELWSLFDFVFPGKLGVLPVFEAEFSVPITVGGYANASPLQVSTAYRCAVVLRDLIMPYLLRRMKADVNAHLTKKTEHVLFCSLTVEQRSTYRAFLASSEVEQIFDGNRNSLYGIDVMRKICNHPDLLEREHSHQNPDYGNPERSGKMKVVAEVLKVWKQQGHRVLLFSQTQQMLDILESFLVANEYSYRRMDGLTPVKQRMALIDEFNNSEDMFVFVLTTKVGGLGTNLTGANRVIIFDPDWNPSNDMQARERAWRIGQKKDVTVYRLITRGTIEEKVYHRQIYKHFLTNKILKNPQQRRFFKARDMKDLFILKDDGDSNASTETSNIFSQLAEEINIVGVQSDKKPESDTQLALHKTAEGSSEQTDVEMTDKTGEAMDEETNILKSLFDAHGIHSAVNHDAIMNANDEEEKMRLEHQASQVAQRAAEALRQSRMLRSRESISVPTWTGRSGCAGAPSSVRRRFGSTVNSRLTQTGDKPSAIKNGISAGLSSGKAPSSAELLNRIRGSREQAIGVGLEQPQSSFPSSSGSSSRVGSLQPEVLIRKICSFVQQKGGSADTTSIVNHFRDIVSFNDKQLFKNLLKEIATLEKDQNRSFWVLKSEYKD</sequence>
<reference key="1">
    <citation type="journal article" date="1999" name="Nature">
        <title>Sequence and analysis of chromosome 2 of the plant Arabidopsis thaliana.</title>
        <authorList>
            <person name="Lin X."/>
            <person name="Kaul S."/>
            <person name="Rounsley S.D."/>
            <person name="Shea T.P."/>
            <person name="Benito M.-I."/>
            <person name="Town C.D."/>
            <person name="Fujii C.Y."/>
            <person name="Mason T.M."/>
            <person name="Bowman C.L."/>
            <person name="Barnstead M.E."/>
            <person name="Feldblyum T.V."/>
            <person name="Buell C.R."/>
            <person name="Ketchum K.A."/>
            <person name="Lee J.J."/>
            <person name="Ronning C.M."/>
            <person name="Koo H.L."/>
            <person name="Moffat K.S."/>
            <person name="Cronin L.A."/>
            <person name="Shen M."/>
            <person name="Pai G."/>
            <person name="Van Aken S."/>
            <person name="Umayam L."/>
            <person name="Tallon L.J."/>
            <person name="Gill J.E."/>
            <person name="Adams M.D."/>
            <person name="Carrera A.J."/>
            <person name="Creasy T.H."/>
            <person name="Goodman H.M."/>
            <person name="Somerville C.R."/>
            <person name="Copenhaver G.P."/>
            <person name="Preuss D."/>
            <person name="Nierman W.C."/>
            <person name="White O."/>
            <person name="Eisen J.A."/>
            <person name="Salzberg S.L."/>
            <person name="Fraser C.M."/>
            <person name="Venter J.C."/>
        </authorList>
    </citation>
    <scope>NUCLEOTIDE SEQUENCE [LARGE SCALE GENOMIC DNA]</scope>
    <source>
        <strain>cv. Columbia</strain>
    </source>
</reference>
<reference key="2">
    <citation type="journal article" date="2017" name="Plant J.">
        <title>Araport11: a complete reannotation of the Arabidopsis thaliana reference genome.</title>
        <authorList>
            <person name="Cheng C.Y."/>
            <person name="Krishnakumar V."/>
            <person name="Chan A.P."/>
            <person name="Thibaud-Nissen F."/>
            <person name="Schobel S."/>
            <person name="Town C.D."/>
        </authorList>
    </citation>
    <scope>GENOME REANNOTATION</scope>
    <source>
        <strain>cv. Columbia</strain>
    </source>
</reference>
<reference key="3">
    <citation type="journal article" date="2005" name="Environ. Mol. Mutagen.">
        <title>Components of nucleotide excision repair and DNA damage tolerance in Arabidopsis thaliana.</title>
        <authorList>
            <person name="Kunz B.A."/>
            <person name="Anderson H.J."/>
            <person name="Osmond M.J."/>
            <person name="Vonarx E.J."/>
        </authorList>
    </citation>
    <scope>REVIEW</scope>
</reference>
<reference key="4">
    <citation type="journal article" date="2005" name="Mutat. Res.">
        <title>Dynamic response of plant genome to ultraviolet radiation and other genotoxic stresses.</title>
        <authorList>
            <person name="Molinier J."/>
            <person name="Oakeley E.J."/>
            <person name="Niederhauser O."/>
            <person name="Kovalchuk I."/>
            <person name="Hohn B."/>
        </authorList>
    </citation>
    <scope>INDUCTION BY BLEOMYCIN</scope>
    <source>
        <strain>cv. Columbia</strain>
    </source>
</reference>
<reference key="5">
    <citation type="journal article" date="2006" name="Genetics">
        <title>Involvement of the Arabidopsis SWI2/SNF2 chromatin remodeling gene family in DNA damage response and recombination.</title>
        <authorList>
            <person name="Shaked H."/>
            <person name="Avivi-Ragolsky N."/>
            <person name="Levy A.A."/>
        </authorList>
    </citation>
    <scope>GENE FAMILY</scope>
    <scope>NOMENCLATURE</scope>
</reference>
<reference key="6">
    <citation type="journal article" date="2013" name="PLoS ONE">
        <title>Genome-wide comparative in silico analysis of the RNA helicase gene family in Zea mays and Glycine max: a comparison with Arabidopsis and Oryza sativa.</title>
        <authorList>
            <person name="Xu R."/>
            <person name="Zhang S."/>
            <person name="Huang J."/>
            <person name="Zheng C."/>
        </authorList>
    </citation>
    <scope>GENE FAMILY</scope>
</reference>
<name>CHR8_ARATH</name>
<proteinExistence type="evidence at transcript level"/>
<comment type="function">
    <text evidence="1">Essential factor involved in transcription-coupled nucleotide excision repair (TCR) which allows RNA polymerase II-blocking lesions to be rapidly removed from the transcribed strand of active genes. Upon DNA-binding, it locally modifies DNA conformation by wrapping the DNA around itself, thereby modifying the interface between stalled RNA polymerase II and DNA. It is required for transcription-coupled repair complex formation.</text>
</comment>
<comment type="subunit">
    <text evidence="1">Homodimer. Binds DNA.</text>
</comment>
<comment type="subcellular location">
    <subcellularLocation>
        <location evidence="1 5">Nucleus</location>
    </subcellularLocation>
</comment>
<comment type="induction">
    <text evidence="7">Accumulates after genotoxic agents treatment such as bleomycin (BLM), a small peptide that create DNA double strand breaks (DSBs).</text>
</comment>
<comment type="similarity">
    <text evidence="11">Belongs to the SNF2/RAD54 helicase family.</text>
</comment>
<keyword id="KW-0067">ATP-binding</keyword>
<keyword id="KW-0175">Coiled coil</keyword>
<keyword id="KW-0227">DNA damage</keyword>
<keyword id="KW-0234">DNA repair</keyword>
<keyword id="KW-0238">DNA-binding</keyword>
<keyword id="KW-0347">Helicase</keyword>
<keyword id="KW-0378">Hydrolase</keyword>
<keyword id="KW-0547">Nucleotide-binding</keyword>
<keyword id="KW-0539">Nucleus</keyword>
<keyword id="KW-1185">Reference proteome</keyword>
<keyword id="KW-0677">Repeat</keyword>
<keyword id="KW-0804">Transcription</keyword>
<keyword id="KW-0805">Transcription regulation</keyword>
<dbReference type="EC" id="3.6.4.-"/>
<dbReference type="EMBL" id="AC005724">
    <property type="protein sequence ID" value="AAD08945.1"/>
    <property type="molecule type" value="Genomic_DNA"/>
</dbReference>
<dbReference type="EMBL" id="CP002685">
    <property type="protein sequence ID" value="AEC06805.1"/>
    <property type="molecule type" value="Genomic_DNA"/>
</dbReference>
<dbReference type="EMBL" id="CP002685">
    <property type="protein sequence ID" value="ANM61954.1"/>
    <property type="molecule type" value="Genomic_DNA"/>
</dbReference>
<dbReference type="EMBL" id="CP002685">
    <property type="protein sequence ID" value="ANM61955.1"/>
    <property type="molecule type" value="Genomic_DNA"/>
</dbReference>
<dbReference type="EMBL" id="CP002685">
    <property type="protein sequence ID" value="ANM61956.1"/>
    <property type="molecule type" value="Genomic_DNA"/>
</dbReference>
<dbReference type="EMBL" id="CP002685">
    <property type="protein sequence ID" value="ANM61957.1"/>
    <property type="molecule type" value="Genomic_DNA"/>
</dbReference>
<dbReference type="EMBL" id="CP002685">
    <property type="protein sequence ID" value="ANM61958.1"/>
    <property type="molecule type" value="Genomic_DNA"/>
</dbReference>
<dbReference type="PIR" id="C84568">
    <property type="entry name" value="C84568"/>
</dbReference>
<dbReference type="RefSeq" id="NP_001318246.1">
    <property type="nucleotide sequence ID" value="NM_001335605.1"/>
</dbReference>
<dbReference type="RefSeq" id="NP_001324143.1">
    <property type="nucleotide sequence ID" value="NM_001335606.1"/>
</dbReference>
<dbReference type="RefSeq" id="NP_001324144.1">
    <property type="nucleotide sequence ID" value="NM_001335610.1"/>
</dbReference>
<dbReference type="RefSeq" id="NP_001324145.1">
    <property type="nucleotide sequence ID" value="NM_001335609.1"/>
</dbReference>
<dbReference type="RefSeq" id="NP_001324146.1">
    <property type="nucleotide sequence ID" value="NM_001335608.1"/>
</dbReference>
<dbReference type="RefSeq" id="NP_179466.1">
    <property type="nucleotide sequence ID" value="NM_127432.2"/>
</dbReference>
<dbReference type="SMR" id="Q9ZV43"/>
<dbReference type="BioGRID" id="1748">
    <property type="interactions" value="1"/>
</dbReference>
<dbReference type="FunCoup" id="Q9ZV43">
    <property type="interactions" value="3441"/>
</dbReference>
<dbReference type="STRING" id="3702.Q9ZV43"/>
<dbReference type="iPTMnet" id="Q9ZV43"/>
<dbReference type="PaxDb" id="3702-AT2G18760.1"/>
<dbReference type="ProteomicsDB" id="246990"/>
<dbReference type="EnsemblPlants" id="AT2G18760.1">
    <property type="protein sequence ID" value="AT2G18760.1"/>
    <property type="gene ID" value="AT2G18760"/>
</dbReference>
<dbReference type="EnsemblPlants" id="AT2G18760.2">
    <property type="protein sequence ID" value="AT2G18760.2"/>
    <property type="gene ID" value="AT2G18760"/>
</dbReference>
<dbReference type="EnsemblPlants" id="AT2G18760.4">
    <property type="protein sequence ID" value="AT2G18760.4"/>
    <property type="gene ID" value="AT2G18760"/>
</dbReference>
<dbReference type="EnsemblPlants" id="AT2G18760.5">
    <property type="protein sequence ID" value="AT2G18760.5"/>
    <property type="gene ID" value="AT2G18760"/>
</dbReference>
<dbReference type="EnsemblPlants" id="AT2G18760.6">
    <property type="protein sequence ID" value="AT2G18760.6"/>
    <property type="gene ID" value="AT2G18760"/>
</dbReference>
<dbReference type="EnsemblPlants" id="AT2G18760.7">
    <property type="protein sequence ID" value="AT2G18760.7"/>
    <property type="gene ID" value="AT2G18760"/>
</dbReference>
<dbReference type="GeneID" id="816391"/>
<dbReference type="Gramene" id="AT2G18760.1">
    <property type="protein sequence ID" value="AT2G18760.1"/>
    <property type="gene ID" value="AT2G18760"/>
</dbReference>
<dbReference type="Gramene" id="AT2G18760.2">
    <property type="protein sequence ID" value="AT2G18760.2"/>
    <property type="gene ID" value="AT2G18760"/>
</dbReference>
<dbReference type="Gramene" id="AT2G18760.4">
    <property type="protein sequence ID" value="AT2G18760.4"/>
    <property type="gene ID" value="AT2G18760"/>
</dbReference>
<dbReference type="Gramene" id="AT2G18760.5">
    <property type="protein sequence ID" value="AT2G18760.5"/>
    <property type="gene ID" value="AT2G18760"/>
</dbReference>
<dbReference type="Gramene" id="AT2G18760.6">
    <property type="protein sequence ID" value="AT2G18760.6"/>
    <property type="gene ID" value="AT2G18760"/>
</dbReference>
<dbReference type="Gramene" id="AT2G18760.7">
    <property type="protein sequence ID" value="AT2G18760.7"/>
    <property type="gene ID" value="AT2G18760"/>
</dbReference>
<dbReference type="KEGG" id="ath:AT2G18760"/>
<dbReference type="Araport" id="AT2G18760"/>
<dbReference type="TAIR" id="AT2G18760">
    <property type="gene designation" value="CHR8"/>
</dbReference>
<dbReference type="eggNOG" id="KOG0387">
    <property type="taxonomic scope" value="Eukaryota"/>
</dbReference>
<dbReference type="HOGENOM" id="CLU_000315_7_0_1"/>
<dbReference type="InParanoid" id="Q9ZV43"/>
<dbReference type="OMA" id="CTFIQQH"/>
<dbReference type="PhylomeDB" id="Q9ZV43"/>
<dbReference type="PRO" id="PR:Q9ZV43"/>
<dbReference type="Proteomes" id="UP000006548">
    <property type="component" value="Chromosome 2"/>
</dbReference>
<dbReference type="ExpressionAtlas" id="Q9ZV43">
    <property type="expression patterns" value="baseline and differential"/>
</dbReference>
<dbReference type="GO" id="GO:0005634">
    <property type="term" value="C:nucleus"/>
    <property type="evidence" value="ECO:0007669"/>
    <property type="project" value="UniProtKB-SubCell"/>
</dbReference>
<dbReference type="GO" id="GO:0005524">
    <property type="term" value="F:ATP binding"/>
    <property type="evidence" value="ECO:0007669"/>
    <property type="project" value="UniProtKB-KW"/>
</dbReference>
<dbReference type="GO" id="GO:0003677">
    <property type="term" value="F:DNA binding"/>
    <property type="evidence" value="ECO:0007669"/>
    <property type="project" value="UniProtKB-KW"/>
</dbReference>
<dbReference type="GO" id="GO:0004386">
    <property type="term" value="F:helicase activity"/>
    <property type="evidence" value="ECO:0007669"/>
    <property type="project" value="UniProtKB-KW"/>
</dbReference>
<dbReference type="GO" id="GO:0016787">
    <property type="term" value="F:hydrolase activity"/>
    <property type="evidence" value="ECO:0007669"/>
    <property type="project" value="UniProtKB-KW"/>
</dbReference>
<dbReference type="GO" id="GO:0006974">
    <property type="term" value="P:DNA damage response"/>
    <property type="evidence" value="ECO:0000270"/>
    <property type="project" value="UniProtKB"/>
</dbReference>
<dbReference type="GO" id="GO:0006281">
    <property type="term" value="P:DNA repair"/>
    <property type="evidence" value="ECO:0000315"/>
    <property type="project" value="TAIR"/>
</dbReference>
<dbReference type="GO" id="GO:0010332">
    <property type="term" value="P:response to gamma radiation"/>
    <property type="evidence" value="ECO:0000315"/>
    <property type="project" value="TAIR"/>
</dbReference>
<dbReference type="CDD" id="cd22254">
    <property type="entry name" value="CSB_WHD"/>
    <property type="match status" value="1"/>
</dbReference>
<dbReference type="CDD" id="cd18000">
    <property type="entry name" value="DEXHc_ERCC6"/>
    <property type="match status" value="1"/>
</dbReference>
<dbReference type="CDD" id="cd18793">
    <property type="entry name" value="SF2_C_SNF"/>
    <property type="match status" value="1"/>
</dbReference>
<dbReference type="FunFam" id="3.40.50.300:FF:000863">
    <property type="entry name" value="DNA excision repair protein ERCC-6"/>
    <property type="match status" value="1"/>
</dbReference>
<dbReference type="FunFam" id="3.40.50.10810:FF:000034">
    <property type="entry name" value="Protein CHROMATIN REMODELING 8"/>
    <property type="match status" value="1"/>
</dbReference>
<dbReference type="Gene3D" id="3.40.50.300">
    <property type="entry name" value="P-loop containing nucleotide triphosphate hydrolases"/>
    <property type="match status" value="1"/>
</dbReference>
<dbReference type="Gene3D" id="3.40.50.10810">
    <property type="entry name" value="Tandem AAA-ATPase domain"/>
    <property type="match status" value="1"/>
</dbReference>
<dbReference type="InterPro" id="IPR014001">
    <property type="entry name" value="Helicase_ATP-bd"/>
</dbReference>
<dbReference type="InterPro" id="IPR001650">
    <property type="entry name" value="Helicase_C-like"/>
</dbReference>
<dbReference type="InterPro" id="IPR027417">
    <property type="entry name" value="P-loop_NTPase"/>
</dbReference>
<dbReference type="InterPro" id="IPR038718">
    <property type="entry name" value="SNF2-like_sf"/>
</dbReference>
<dbReference type="InterPro" id="IPR049730">
    <property type="entry name" value="SNF2/RAD54-like_C"/>
</dbReference>
<dbReference type="InterPro" id="IPR000330">
    <property type="entry name" value="SNF2_N"/>
</dbReference>
<dbReference type="InterPro" id="IPR050496">
    <property type="entry name" value="SNF2_RAD54_helicase_repair"/>
</dbReference>
<dbReference type="PANTHER" id="PTHR45629:SF7">
    <property type="entry name" value="DNA EXCISION REPAIR PROTEIN ERCC-6-RELATED"/>
    <property type="match status" value="1"/>
</dbReference>
<dbReference type="PANTHER" id="PTHR45629">
    <property type="entry name" value="SNF2/RAD54 FAMILY MEMBER"/>
    <property type="match status" value="1"/>
</dbReference>
<dbReference type="Pfam" id="PF00271">
    <property type="entry name" value="Helicase_C"/>
    <property type="match status" value="1"/>
</dbReference>
<dbReference type="Pfam" id="PF00176">
    <property type="entry name" value="SNF2-rel_dom"/>
    <property type="match status" value="1"/>
</dbReference>
<dbReference type="SMART" id="SM00487">
    <property type="entry name" value="DEXDc"/>
    <property type="match status" value="1"/>
</dbReference>
<dbReference type="SMART" id="SM00490">
    <property type="entry name" value="HELICc"/>
    <property type="match status" value="1"/>
</dbReference>
<dbReference type="SUPFAM" id="SSF52540">
    <property type="entry name" value="P-loop containing nucleoside triphosphate hydrolases"/>
    <property type="match status" value="2"/>
</dbReference>
<dbReference type="PROSITE" id="PS51192">
    <property type="entry name" value="HELICASE_ATP_BIND_1"/>
    <property type="match status" value="1"/>
</dbReference>
<dbReference type="PROSITE" id="PS51194">
    <property type="entry name" value="HELICASE_CTER"/>
    <property type="match status" value="1"/>
</dbReference>